<organism>
    <name type="scientific">Escherichia coli (strain SMS-3-5 / SECEC)</name>
    <dbReference type="NCBI Taxonomy" id="439855"/>
    <lineage>
        <taxon>Bacteria</taxon>
        <taxon>Pseudomonadati</taxon>
        <taxon>Pseudomonadota</taxon>
        <taxon>Gammaproteobacteria</taxon>
        <taxon>Enterobacterales</taxon>
        <taxon>Enterobacteriaceae</taxon>
        <taxon>Escherichia</taxon>
    </lineage>
</organism>
<proteinExistence type="inferred from homology"/>
<reference key="1">
    <citation type="journal article" date="2008" name="J. Bacteriol.">
        <title>Insights into the environmental resistance gene pool from the genome sequence of the multidrug-resistant environmental isolate Escherichia coli SMS-3-5.</title>
        <authorList>
            <person name="Fricke W.F."/>
            <person name="Wright M.S."/>
            <person name="Lindell A.H."/>
            <person name="Harkins D.M."/>
            <person name="Baker-Austin C."/>
            <person name="Ravel J."/>
            <person name="Stepanauskas R."/>
        </authorList>
    </citation>
    <scope>NUCLEOTIDE SEQUENCE [LARGE SCALE GENOMIC DNA]</scope>
    <source>
        <strain>SMS-3-5 / SECEC</strain>
    </source>
</reference>
<comment type="function">
    <text evidence="1">Overproduction of CaiE stimulates the activity of CaiB and CaiD.</text>
</comment>
<comment type="pathway">
    <text evidence="1">Amine and polyamine metabolism; carnitine metabolism.</text>
</comment>
<comment type="similarity">
    <text evidence="1">Belongs to the transferase hexapeptide repeat family.</text>
</comment>
<feature type="chain" id="PRO_1000200923" description="Carnitine operon protein CaiE">
    <location>
        <begin position="1"/>
        <end position="196"/>
    </location>
</feature>
<feature type="region of interest" description="Disordered" evidence="2">
    <location>
        <begin position="173"/>
        <end position="196"/>
    </location>
</feature>
<protein>
    <recommendedName>
        <fullName evidence="1">Carnitine operon protein CaiE</fullName>
    </recommendedName>
</protein>
<accession>B1LFW8</accession>
<evidence type="ECO:0000255" key="1">
    <source>
        <dbReference type="HAMAP-Rule" id="MF_01525"/>
    </source>
</evidence>
<evidence type="ECO:0000256" key="2">
    <source>
        <dbReference type="SAM" id="MobiDB-lite"/>
    </source>
</evidence>
<gene>
    <name evidence="1" type="primary">caiE</name>
    <name type="ordered locus">EcSMS35_0036</name>
</gene>
<name>CAIE_ECOSM</name>
<keyword id="KW-0677">Repeat</keyword>
<keyword id="KW-0808">Transferase</keyword>
<sequence length="196" mass="21073">MSYYAFEGLIPVVHPTAFVHPSAVLIGDVIVGAGVYIGPLASLRGDYGRLLVQAGANIQDGCIMHGYCDTDTIVGENGHIGHGAILHGCVIGRDALVGMNSVIMDGAVIGEESIVAAMSFVKAGFRGEKRQLLMGTPARAVRSVSDDELHWKRLNTKEYQDLVGRCHASLHETQPLRQMEGNRPRLQGTTDVAPKR</sequence>
<dbReference type="EMBL" id="CP000970">
    <property type="protein sequence ID" value="ACB19069.1"/>
    <property type="molecule type" value="Genomic_DNA"/>
</dbReference>
<dbReference type="RefSeq" id="WP_000122898.1">
    <property type="nucleotide sequence ID" value="NC_010498.1"/>
</dbReference>
<dbReference type="SMR" id="B1LFW8"/>
<dbReference type="KEGG" id="ecm:EcSMS35_0036"/>
<dbReference type="HOGENOM" id="CLU_064827_4_2_6"/>
<dbReference type="UniPathway" id="UPA00117"/>
<dbReference type="Proteomes" id="UP000007011">
    <property type="component" value="Chromosome"/>
</dbReference>
<dbReference type="GO" id="GO:0016740">
    <property type="term" value="F:transferase activity"/>
    <property type="evidence" value="ECO:0007669"/>
    <property type="project" value="UniProtKB-KW"/>
</dbReference>
<dbReference type="GO" id="GO:0009437">
    <property type="term" value="P:carnitine metabolic process"/>
    <property type="evidence" value="ECO:0007669"/>
    <property type="project" value="UniProtKB-UniRule"/>
</dbReference>
<dbReference type="CDD" id="cd04745">
    <property type="entry name" value="LbH_paaY_like"/>
    <property type="match status" value="1"/>
</dbReference>
<dbReference type="FunFam" id="2.160.10.10:FF:000012">
    <property type="entry name" value="Carnitine operon protein CaiE"/>
    <property type="match status" value="1"/>
</dbReference>
<dbReference type="Gene3D" id="2.160.10.10">
    <property type="entry name" value="Hexapeptide repeat proteins"/>
    <property type="match status" value="1"/>
</dbReference>
<dbReference type="HAMAP" id="MF_01525">
    <property type="entry name" value="CaiE"/>
    <property type="match status" value="1"/>
</dbReference>
<dbReference type="InterPro" id="IPR023446">
    <property type="entry name" value="CaiE"/>
</dbReference>
<dbReference type="InterPro" id="IPR001451">
    <property type="entry name" value="Hexapep"/>
</dbReference>
<dbReference type="InterPro" id="IPR050484">
    <property type="entry name" value="Transf_Hexapept/Carb_Anhydrase"/>
</dbReference>
<dbReference type="InterPro" id="IPR011004">
    <property type="entry name" value="Trimer_LpxA-like_sf"/>
</dbReference>
<dbReference type="NCBIfam" id="NF010150">
    <property type="entry name" value="PRK13627.1"/>
    <property type="match status" value="1"/>
</dbReference>
<dbReference type="PANTHER" id="PTHR13061">
    <property type="entry name" value="DYNACTIN SUBUNIT P25"/>
    <property type="match status" value="1"/>
</dbReference>
<dbReference type="PANTHER" id="PTHR13061:SF29">
    <property type="entry name" value="GAMMA CARBONIC ANHYDRASE-LIKE 1, MITOCHONDRIAL-RELATED"/>
    <property type="match status" value="1"/>
</dbReference>
<dbReference type="Pfam" id="PF00132">
    <property type="entry name" value="Hexapep"/>
    <property type="match status" value="1"/>
</dbReference>
<dbReference type="SUPFAM" id="SSF51161">
    <property type="entry name" value="Trimeric LpxA-like enzymes"/>
    <property type="match status" value="1"/>
</dbReference>